<organism>
    <name type="scientific">Stenotrophomonas maltophilia (strain K279a)</name>
    <dbReference type="NCBI Taxonomy" id="522373"/>
    <lineage>
        <taxon>Bacteria</taxon>
        <taxon>Pseudomonadati</taxon>
        <taxon>Pseudomonadota</taxon>
        <taxon>Gammaproteobacteria</taxon>
        <taxon>Lysobacterales</taxon>
        <taxon>Lysobacteraceae</taxon>
        <taxon>Stenotrophomonas</taxon>
        <taxon>Stenotrophomonas maltophilia group</taxon>
    </lineage>
</organism>
<name>HEM1_STRMK</name>
<accession>B2FQ15</accession>
<reference key="1">
    <citation type="journal article" date="2008" name="Genome Biol.">
        <title>The complete genome, comparative and functional analysis of Stenotrophomonas maltophilia reveals an organism heavily shielded by drug resistance determinants.</title>
        <authorList>
            <person name="Crossman L.C."/>
            <person name="Gould V.C."/>
            <person name="Dow J.M."/>
            <person name="Vernikos G.S."/>
            <person name="Okazaki A."/>
            <person name="Sebaihia M."/>
            <person name="Saunders D."/>
            <person name="Arrowsmith C."/>
            <person name="Carver T."/>
            <person name="Peters N."/>
            <person name="Adlem E."/>
            <person name="Kerhornou A."/>
            <person name="Lord A."/>
            <person name="Murphy L."/>
            <person name="Seeger K."/>
            <person name="Squares R."/>
            <person name="Rutter S."/>
            <person name="Quail M.A."/>
            <person name="Rajandream M.A."/>
            <person name="Harris D."/>
            <person name="Churcher C."/>
            <person name="Bentley S.D."/>
            <person name="Parkhill J."/>
            <person name="Thomson N.R."/>
            <person name="Avison M.B."/>
        </authorList>
    </citation>
    <scope>NUCLEOTIDE SEQUENCE [LARGE SCALE GENOMIC DNA]</scope>
    <source>
        <strain>K279a</strain>
    </source>
</reference>
<sequence>MTLWVLGLNHQTAPVELRERAAFAGEALPRALGSLRDTPQIAEAVLLSTCNRTELYAVADSAQALDQWLHAQAGDLQGYLYQHADAEAVRHLFRVATGLDSMVLGEPQILGQVKDAWSTARDHGLLGQRLDRLFQQTFSVAKRARTDTQVGANPVSVASAAVRLAQNAFARLDDSTVLLVGAGETIELAARHLSEGKVRRLLIANRTLAHAQELASRHGGVALPLTELDRHLGEADVVFSATAAREPVIHREMVAKALRARRHKPMLLFDLAVPRDIEAEVGTLNDAFLYTVDDLERAVEDNRRGRREAAAEAEAIIDLQVSRFIETQQASAHQAPLRQLRAFGEATRTELLERARQQLANGKPADEVLELLAHGLTNRLLHPPTAALRAAALSGDADLTRAAERLFPATPGYRHPPVRPDDADPAP</sequence>
<feature type="chain" id="PRO_1000093172" description="Glutamyl-tRNA reductase">
    <location>
        <begin position="1"/>
        <end position="427"/>
    </location>
</feature>
<feature type="region of interest" description="Disordered" evidence="2">
    <location>
        <begin position="407"/>
        <end position="427"/>
    </location>
</feature>
<feature type="compositionally biased region" description="Basic and acidic residues" evidence="2">
    <location>
        <begin position="418"/>
        <end position="427"/>
    </location>
</feature>
<feature type="active site" description="Nucleophile" evidence="1">
    <location>
        <position position="50"/>
    </location>
</feature>
<feature type="binding site" evidence="1">
    <location>
        <begin position="49"/>
        <end position="52"/>
    </location>
    <ligand>
        <name>substrate</name>
    </ligand>
</feature>
<feature type="binding site" evidence="1">
    <location>
        <position position="101"/>
    </location>
    <ligand>
        <name>substrate</name>
    </ligand>
</feature>
<feature type="binding site" evidence="1">
    <location>
        <begin position="106"/>
        <end position="108"/>
    </location>
    <ligand>
        <name>substrate</name>
    </ligand>
</feature>
<feature type="binding site" evidence="1">
    <location>
        <position position="112"/>
    </location>
    <ligand>
        <name>substrate</name>
    </ligand>
</feature>
<feature type="binding site" evidence="1">
    <location>
        <begin position="181"/>
        <end position="186"/>
    </location>
    <ligand>
        <name>NADP(+)</name>
        <dbReference type="ChEBI" id="CHEBI:58349"/>
    </ligand>
</feature>
<feature type="site" description="Important for activity" evidence="1">
    <location>
        <position position="91"/>
    </location>
</feature>
<dbReference type="EC" id="1.2.1.70" evidence="1"/>
<dbReference type="EMBL" id="AM743169">
    <property type="protein sequence ID" value="CAQ44445.1"/>
    <property type="molecule type" value="Genomic_DNA"/>
</dbReference>
<dbReference type="RefSeq" id="WP_012479225.1">
    <property type="nucleotide sequence ID" value="NC_010943.1"/>
</dbReference>
<dbReference type="SMR" id="B2FQ15"/>
<dbReference type="EnsemblBacteria" id="CAQ44445">
    <property type="protein sequence ID" value="CAQ44445"/>
    <property type="gene ID" value="Smlt0871"/>
</dbReference>
<dbReference type="KEGG" id="sml:Smlt0871"/>
<dbReference type="PATRIC" id="fig|522373.3.peg.843"/>
<dbReference type="eggNOG" id="COG0373">
    <property type="taxonomic scope" value="Bacteria"/>
</dbReference>
<dbReference type="HOGENOM" id="CLU_035113_2_2_6"/>
<dbReference type="UniPathway" id="UPA00251">
    <property type="reaction ID" value="UER00316"/>
</dbReference>
<dbReference type="Proteomes" id="UP000008840">
    <property type="component" value="Chromosome"/>
</dbReference>
<dbReference type="GO" id="GO:0008883">
    <property type="term" value="F:glutamyl-tRNA reductase activity"/>
    <property type="evidence" value="ECO:0007669"/>
    <property type="project" value="UniProtKB-UniRule"/>
</dbReference>
<dbReference type="GO" id="GO:0050661">
    <property type="term" value="F:NADP binding"/>
    <property type="evidence" value="ECO:0007669"/>
    <property type="project" value="InterPro"/>
</dbReference>
<dbReference type="GO" id="GO:0019353">
    <property type="term" value="P:protoporphyrinogen IX biosynthetic process from glutamate"/>
    <property type="evidence" value="ECO:0007669"/>
    <property type="project" value="TreeGrafter"/>
</dbReference>
<dbReference type="CDD" id="cd05213">
    <property type="entry name" value="NAD_bind_Glutamyl_tRNA_reduct"/>
    <property type="match status" value="1"/>
</dbReference>
<dbReference type="FunFam" id="3.30.460.30:FF:000001">
    <property type="entry name" value="Glutamyl-tRNA reductase"/>
    <property type="match status" value="1"/>
</dbReference>
<dbReference type="FunFam" id="3.40.50.720:FF:000031">
    <property type="entry name" value="Glutamyl-tRNA reductase"/>
    <property type="match status" value="1"/>
</dbReference>
<dbReference type="Gene3D" id="3.30.460.30">
    <property type="entry name" value="Glutamyl-tRNA reductase, N-terminal domain"/>
    <property type="match status" value="1"/>
</dbReference>
<dbReference type="Gene3D" id="3.40.50.720">
    <property type="entry name" value="NAD(P)-binding Rossmann-like Domain"/>
    <property type="match status" value="1"/>
</dbReference>
<dbReference type="HAMAP" id="MF_00087">
    <property type="entry name" value="Glu_tRNA_reductase"/>
    <property type="match status" value="1"/>
</dbReference>
<dbReference type="InterPro" id="IPR000343">
    <property type="entry name" value="4pyrrol_synth_GluRdtase"/>
</dbReference>
<dbReference type="InterPro" id="IPR015896">
    <property type="entry name" value="4pyrrol_synth_GluRdtase_dimer"/>
</dbReference>
<dbReference type="InterPro" id="IPR015895">
    <property type="entry name" value="4pyrrol_synth_GluRdtase_N"/>
</dbReference>
<dbReference type="InterPro" id="IPR018214">
    <property type="entry name" value="GluRdtase_CS"/>
</dbReference>
<dbReference type="InterPro" id="IPR036453">
    <property type="entry name" value="GluRdtase_dimer_dom_sf"/>
</dbReference>
<dbReference type="InterPro" id="IPR036343">
    <property type="entry name" value="GluRdtase_N_sf"/>
</dbReference>
<dbReference type="InterPro" id="IPR036291">
    <property type="entry name" value="NAD(P)-bd_dom_sf"/>
</dbReference>
<dbReference type="InterPro" id="IPR006151">
    <property type="entry name" value="Shikm_DH/Glu-tRNA_Rdtase"/>
</dbReference>
<dbReference type="NCBIfam" id="TIGR01035">
    <property type="entry name" value="hemA"/>
    <property type="match status" value="1"/>
</dbReference>
<dbReference type="PANTHER" id="PTHR43013">
    <property type="entry name" value="GLUTAMYL-TRNA REDUCTASE"/>
    <property type="match status" value="1"/>
</dbReference>
<dbReference type="PANTHER" id="PTHR43013:SF1">
    <property type="entry name" value="GLUTAMYL-TRNA REDUCTASE"/>
    <property type="match status" value="1"/>
</dbReference>
<dbReference type="Pfam" id="PF00745">
    <property type="entry name" value="GlutR_dimer"/>
    <property type="match status" value="1"/>
</dbReference>
<dbReference type="Pfam" id="PF05201">
    <property type="entry name" value="GlutR_N"/>
    <property type="match status" value="1"/>
</dbReference>
<dbReference type="Pfam" id="PF01488">
    <property type="entry name" value="Shikimate_DH"/>
    <property type="match status" value="1"/>
</dbReference>
<dbReference type="PIRSF" id="PIRSF000445">
    <property type="entry name" value="4pyrrol_synth_GluRdtase"/>
    <property type="match status" value="1"/>
</dbReference>
<dbReference type="SUPFAM" id="SSF69742">
    <property type="entry name" value="Glutamyl tRNA-reductase catalytic, N-terminal domain"/>
    <property type="match status" value="1"/>
</dbReference>
<dbReference type="SUPFAM" id="SSF69075">
    <property type="entry name" value="Glutamyl tRNA-reductase dimerization domain"/>
    <property type="match status" value="1"/>
</dbReference>
<dbReference type="SUPFAM" id="SSF51735">
    <property type="entry name" value="NAD(P)-binding Rossmann-fold domains"/>
    <property type="match status" value="1"/>
</dbReference>
<dbReference type="PROSITE" id="PS00747">
    <property type="entry name" value="GLUTR"/>
    <property type="match status" value="1"/>
</dbReference>
<protein>
    <recommendedName>
        <fullName evidence="1">Glutamyl-tRNA reductase</fullName>
        <shortName evidence="1">GluTR</shortName>
        <ecNumber evidence="1">1.2.1.70</ecNumber>
    </recommendedName>
</protein>
<evidence type="ECO:0000255" key="1">
    <source>
        <dbReference type="HAMAP-Rule" id="MF_00087"/>
    </source>
</evidence>
<evidence type="ECO:0000256" key="2">
    <source>
        <dbReference type="SAM" id="MobiDB-lite"/>
    </source>
</evidence>
<comment type="function">
    <text evidence="1">Catalyzes the NADPH-dependent reduction of glutamyl-tRNA(Glu) to glutamate 1-semialdehyde (GSA).</text>
</comment>
<comment type="catalytic activity">
    <reaction evidence="1">
        <text>(S)-4-amino-5-oxopentanoate + tRNA(Glu) + NADP(+) = L-glutamyl-tRNA(Glu) + NADPH + H(+)</text>
        <dbReference type="Rhea" id="RHEA:12344"/>
        <dbReference type="Rhea" id="RHEA-COMP:9663"/>
        <dbReference type="Rhea" id="RHEA-COMP:9680"/>
        <dbReference type="ChEBI" id="CHEBI:15378"/>
        <dbReference type="ChEBI" id="CHEBI:57501"/>
        <dbReference type="ChEBI" id="CHEBI:57783"/>
        <dbReference type="ChEBI" id="CHEBI:58349"/>
        <dbReference type="ChEBI" id="CHEBI:78442"/>
        <dbReference type="ChEBI" id="CHEBI:78520"/>
        <dbReference type="EC" id="1.2.1.70"/>
    </reaction>
</comment>
<comment type="pathway">
    <text evidence="1">Porphyrin-containing compound metabolism; protoporphyrin-IX biosynthesis; 5-aminolevulinate from L-glutamyl-tRNA(Glu): step 1/2.</text>
</comment>
<comment type="subunit">
    <text evidence="1">Homodimer.</text>
</comment>
<comment type="domain">
    <text evidence="1">Possesses an unusual extended V-shaped dimeric structure with each monomer consisting of three distinct domains arranged along a curved 'spinal' alpha-helix. The N-terminal catalytic domain specifically recognizes the glutamate moiety of the substrate. The second domain is the NADPH-binding domain, and the third C-terminal domain is responsible for dimerization.</text>
</comment>
<comment type="miscellaneous">
    <text evidence="1">During catalysis, the active site Cys acts as a nucleophile attacking the alpha-carbonyl group of tRNA-bound glutamate with the formation of a thioester intermediate between enzyme and glutamate, and the concomitant release of tRNA(Glu). The thioester intermediate is finally reduced by direct hydride transfer from NADPH, to form the product GSA.</text>
</comment>
<comment type="similarity">
    <text evidence="1">Belongs to the glutamyl-tRNA reductase family.</text>
</comment>
<gene>
    <name evidence="1" type="primary">hemA</name>
    <name type="ordered locus">Smlt0871</name>
</gene>
<proteinExistence type="inferred from homology"/>
<keyword id="KW-0521">NADP</keyword>
<keyword id="KW-0560">Oxidoreductase</keyword>
<keyword id="KW-0627">Porphyrin biosynthesis</keyword>
<keyword id="KW-1185">Reference proteome</keyword>